<sequence length="316" mass="35045">MQGENFTIWSIFFLEGFSQYPGLEVVLFVFSLVMYLTTLLGNSTLILITILDSRLKTPMYLFLGNLSFMDICYTSASVPTLLVNLLSSQKTIIFSGCAVQMYLSLAMGSTECVLLAVMAYDRYVAICNPLRYSIIMNRCVCARMATVSWVTGCLTALLETSFALQIPLCGNLIDHFTCEILAVLKLACTSSLLMNTIMLVVSILLLPIPMLLVCISYIFILSTILRITSAEGRNKAFSTCGAHLTVVILYYGAALSMYLKPSSSNAQKIDKIISLLYGVLTPMLNPIIYSLRNKEVKDAMKKLLGKITLHQTHEHL</sequence>
<protein>
    <recommendedName>
        <fullName>Olfactory receptor 2K2</fullName>
    </recommendedName>
    <alternativeName>
        <fullName>HTPCRH06</fullName>
    </alternativeName>
    <alternativeName>
        <fullName>Olfactory receptor OR9-17</fullName>
    </alternativeName>
</protein>
<name>OR2K2_HUMAN</name>
<keyword id="KW-1003">Cell membrane</keyword>
<keyword id="KW-1015">Disulfide bond</keyword>
<keyword id="KW-0297">G-protein coupled receptor</keyword>
<keyword id="KW-0325">Glycoprotein</keyword>
<keyword id="KW-0472">Membrane</keyword>
<keyword id="KW-0552">Olfaction</keyword>
<keyword id="KW-0675">Receptor</keyword>
<keyword id="KW-1185">Reference proteome</keyword>
<keyword id="KW-0716">Sensory transduction</keyword>
<keyword id="KW-0807">Transducer</keyword>
<keyword id="KW-0812">Transmembrane</keyword>
<keyword id="KW-1133">Transmembrane helix</keyword>
<organism>
    <name type="scientific">Homo sapiens</name>
    <name type="common">Human</name>
    <dbReference type="NCBI Taxonomy" id="9606"/>
    <lineage>
        <taxon>Eukaryota</taxon>
        <taxon>Metazoa</taxon>
        <taxon>Chordata</taxon>
        <taxon>Craniata</taxon>
        <taxon>Vertebrata</taxon>
        <taxon>Euteleostomi</taxon>
        <taxon>Mammalia</taxon>
        <taxon>Eutheria</taxon>
        <taxon>Euarchontoglires</taxon>
        <taxon>Primates</taxon>
        <taxon>Haplorrhini</taxon>
        <taxon>Catarrhini</taxon>
        <taxon>Hominidae</taxon>
        <taxon>Homo</taxon>
    </lineage>
</organism>
<accession>Q8NGT1</accession>
<accession>Q2TA61</accession>
<accession>Q5VYK4</accession>
<accession>Q6IFI5</accession>
<reference key="1">
    <citation type="submission" date="2001-07" db="EMBL/GenBank/DDBJ databases">
        <title>Genome-wide discovery and analysis of human seven transmembrane helix receptor genes.</title>
        <authorList>
            <person name="Suwa M."/>
            <person name="Sato T."/>
            <person name="Okouchi I."/>
            <person name="Arita M."/>
            <person name="Futami K."/>
            <person name="Matsumoto S."/>
            <person name="Tsutsumi S."/>
            <person name="Aburatani H."/>
            <person name="Asai K."/>
            <person name="Akiyama Y."/>
        </authorList>
    </citation>
    <scope>NUCLEOTIDE SEQUENCE [GENOMIC DNA]</scope>
</reference>
<reference key="2">
    <citation type="journal article" date="2004" name="Nature">
        <title>DNA sequence and analysis of human chromosome 9.</title>
        <authorList>
            <person name="Humphray S.J."/>
            <person name="Oliver K."/>
            <person name="Hunt A.R."/>
            <person name="Plumb R.W."/>
            <person name="Loveland J.E."/>
            <person name="Howe K.L."/>
            <person name="Andrews T.D."/>
            <person name="Searle S."/>
            <person name="Hunt S.E."/>
            <person name="Scott C.E."/>
            <person name="Jones M.C."/>
            <person name="Ainscough R."/>
            <person name="Almeida J.P."/>
            <person name="Ambrose K.D."/>
            <person name="Ashwell R.I.S."/>
            <person name="Babbage A.K."/>
            <person name="Babbage S."/>
            <person name="Bagguley C.L."/>
            <person name="Bailey J."/>
            <person name="Banerjee R."/>
            <person name="Barker D.J."/>
            <person name="Barlow K.F."/>
            <person name="Bates K."/>
            <person name="Beasley H."/>
            <person name="Beasley O."/>
            <person name="Bird C.P."/>
            <person name="Bray-Allen S."/>
            <person name="Brown A.J."/>
            <person name="Brown J.Y."/>
            <person name="Burford D."/>
            <person name="Burrill W."/>
            <person name="Burton J."/>
            <person name="Carder C."/>
            <person name="Carter N.P."/>
            <person name="Chapman J.C."/>
            <person name="Chen Y."/>
            <person name="Clarke G."/>
            <person name="Clark S.Y."/>
            <person name="Clee C.M."/>
            <person name="Clegg S."/>
            <person name="Collier R.E."/>
            <person name="Corby N."/>
            <person name="Crosier M."/>
            <person name="Cummings A.T."/>
            <person name="Davies J."/>
            <person name="Dhami P."/>
            <person name="Dunn M."/>
            <person name="Dutta I."/>
            <person name="Dyer L.W."/>
            <person name="Earthrowl M.E."/>
            <person name="Faulkner L."/>
            <person name="Fleming C.J."/>
            <person name="Frankish A."/>
            <person name="Frankland J.A."/>
            <person name="French L."/>
            <person name="Fricker D.G."/>
            <person name="Garner P."/>
            <person name="Garnett J."/>
            <person name="Ghori J."/>
            <person name="Gilbert J.G.R."/>
            <person name="Glison C."/>
            <person name="Grafham D.V."/>
            <person name="Gribble S."/>
            <person name="Griffiths C."/>
            <person name="Griffiths-Jones S."/>
            <person name="Grocock R."/>
            <person name="Guy J."/>
            <person name="Hall R.E."/>
            <person name="Hammond S."/>
            <person name="Harley J.L."/>
            <person name="Harrison E.S.I."/>
            <person name="Hart E.A."/>
            <person name="Heath P.D."/>
            <person name="Henderson C.D."/>
            <person name="Hopkins B.L."/>
            <person name="Howard P.J."/>
            <person name="Howden P.J."/>
            <person name="Huckle E."/>
            <person name="Johnson C."/>
            <person name="Johnson D."/>
            <person name="Joy A.A."/>
            <person name="Kay M."/>
            <person name="Keenan S."/>
            <person name="Kershaw J.K."/>
            <person name="Kimberley A.M."/>
            <person name="King A."/>
            <person name="Knights A."/>
            <person name="Laird G.K."/>
            <person name="Langford C."/>
            <person name="Lawlor S."/>
            <person name="Leongamornlert D.A."/>
            <person name="Leversha M."/>
            <person name="Lloyd C."/>
            <person name="Lloyd D.M."/>
            <person name="Lovell J."/>
            <person name="Martin S."/>
            <person name="Mashreghi-Mohammadi M."/>
            <person name="Matthews L."/>
            <person name="McLaren S."/>
            <person name="McLay K.E."/>
            <person name="McMurray A."/>
            <person name="Milne S."/>
            <person name="Nickerson T."/>
            <person name="Nisbett J."/>
            <person name="Nordsiek G."/>
            <person name="Pearce A.V."/>
            <person name="Peck A.I."/>
            <person name="Porter K.M."/>
            <person name="Pandian R."/>
            <person name="Pelan S."/>
            <person name="Phillimore B."/>
            <person name="Povey S."/>
            <person name="Ramsey Y."/>
            <person name="Rand V."/>
            <person name="Scharfe M."/>
            <person name="Sehra H.K."/>
            <person name="Shownkeen R."/>
            <person name="Sims S.K."/>
            <person name="Skuce C.D."/>
            <person name="Smith M."/>
            <person name="Steward C.A."/>
            <person name="Swarbreck D."/>
            <person name="Sycamore N."/>
            <person name="Tester J."/>
            <person name="Thorpe A."/>
            <person name="Tracey A."/>
            <person name="Tromans A."/>
            <person name="Thomas D.W."/>
            <person name="Wall M."/>
            <person name="Wallis J.M."/>
            <person name="West A.P."/>
            <person name="Whitehead S.L."/>
            <person name="Willey D.L."/>
            <person name="Williams S.A."/>
            <person name="Wilming L."/>
            <person name="Wray P.W."/>
            <person name="Young L."/>
            <person name="Ashurst J.L."/>
            <person name="Coulson A."/>
            <person name="Blocker H."/>
            <person name="Durbin R.M."/>
            <person name="Sulston J.E."/>
            <person name="Hubbard T."/>
            <person name="Jackson M.J."/>
            <person name="Bentley D.R."/>
            <person name="Beck S."/>
            <person name="Rogers J."/>
            <person name="Dunham I."/>
        </authorList>
    </citation>
    <scope>NUCLEOTIDE SEQUENCE [LARGE SCALE GENOMIC DNA]</scope>
</reference>
<reference key="3">
    <citation type="journal article" date="2004" name="Genome Res.">
        <title>The status, quality, and expansion of the NIH full-length cDNA project: the Mammalian Gene Collection (MGC).</title>
        <authorList>
            <consortium name="The MGC Project Team"/>
        </authorList>
    </citation>
    <scope>NUCLEOTIDE SEQUENCE [LARGE SCALE MRNA]</scope>
</reference>
<reference key="4">
    <citation type="journal article" date="2004" name="Proc. Natl. Acad. Sci. U.S.A.">
        <title>The human olfactory receptor gene family.</title>
        <authorList>
            <person name="Malnic B."/>
            <person name="Godfrey P.A."/>
            <person name="Buck L.B."/>
        </authorList>
    </citation>
    <scope>IDENTIFICATION</scope>
</reference>
<reference key="5">
    <citation type="journal article" date="2004" name="Proc. Natl. Acad. Sci. U.S.A.">
        <authorList>
            <person name="Malnic B."/>
            <person name="Godfrey P.A."/>
            <person name="Buck L.B."/>
        </authorList>
    </citation>
    <scope>ERRATUM OF PUBMED:14983052</scope>
</reference>
<dbReference type="EMBL" id="AB065707">
    <property type="protein sequence ID" value="BAC05929.1"/>
    <property type="molecule type" value="Genomic_DNA"/>
</dbReference>
<dbReference type="EMBL" id="AL354661">
    <property type="status" value="NOT_ANNOTATED_CDS"/>
    <property type="molecule type" value="Genomic_DNA"/>
</dbReference>
<dbReference type="EMBL" id="BC111086">
    <property type="protein sequence ID" value="AAI11087.1"/>
    <property type="molecule type" value="mRNA"/>
</dbReference>
<dbReference type="EMBL" id="BK004277">
    <property type="protein sequence ID" value="DAA04675.1"/>
    <property type="status" value="ALT_INIT"/>
    <property type="molecule type" value="Genomic_DNA"/>
</dbReference>
<dbReference type="CCDS" id="CCDS6778.1"/>
<dbReference type="RefSeq" id="NP_995581.1">
    <property type="nucleotide sequence ID" value="NM_205859.2"/>
</dbReference>
<dbReference type="RefSeq" id="XP_011516822.1">
    <property type="nucleotide sequence ID" value="XM_011518520.2"/>
</dbReference>
<dbReference type="SMR" id="Q8NGT1"/>
<dbReference type="BioGRID" id="117636">
    <property type="interactions" value="9"/>
</dbReference>
<dbReference type="FunCoup" id="Q8NGT1">
    <property type="interactions" value="476"/>
</dbReference>
<dbReference type="IntAct" id="Q8NGT1">
    <property type="interactions" value="5"/>
</dbReference>
<dbReference type="STRING" id="9606.ENSP00000305055"/>
<dbReference type="GlyCosmos" id="Q8NGT1">
    <property type="glycosylation" value="1 site, No reported glycans"/>
</dbReference>
<dbReference type="GlyGen" id="Q8NGT1">
    <property type="glycosylation" value="1 site"/>
</dbReference>
<dbReference type="iPTMnet" id="Q8NGT1"/>
<dbReference type="PhosphoSitePlus" id="Q8NGT1"/>
<dbReference type="BioMuta" id="OR2K2"/>
<dbReference type="DMDM" id="218511729"/>
<dbReference type="MassIVE" id="Q8NGT1"/>
<dbReference type="PaxDb" id="9606-ENSP00000305055"/>
<dbReference type="Antibodypedia" id="15116">
    <property type="antibodies" value="113 antibodies from 22 providers"/>
</dbReference>
<dbReference type="DNASU" id="26248"/>
<dbReference type="Ensembl" id="ENST00000302681.3">
    <property type="protein sequence ID" value="ENSP00000305055.1"/>
    <property type="gene ID" value="ENSG00000171133.4"/>
</dbReference>
<dbReference type="GeneID" id="26248"/>
<dbReference type="KEGG" id="hsa:26248"/>
<dbReference type="MANE-Select" id="ENST00000302681.3">
    <property type="protein sequence ID" value="ENSP00000305055.1"/>
    <property type="RefSeq nucleotide sequence ID" value="NM_205859.2"/>
    <property type="RefSeq protein sequence ID" value="NP_995581.1"/>
</dbReference>
<dbReference type="UCSC" id="uc011lwp.2">
    <property type="organism name" value="human"/>
</dbReference>
<dbReference type="AGR" id="HGNC:8264"/>
<dbReference type="CTD" id="26248"/>
<dbReference type="GeneCards" id="OR2K2"/>
<dbReference type="HGNC" id="HGNC:8264">
    <property type="gene designation" value="OR2K2"/>
</dbReference>
<dbReference type="HPA" id="ENSG00000171133">
    <property type="expression patterns" value="Not detected"/>
</dbReference>
<dbReference type="neXtProt" id="NX_Q8NGT1"/>
<dbReference type="OpenTargets" id="ENSG00000171133"/>
<dbReference type="PharmGKB" id="PA32181"/>
<dbReference type="VEuPathDB" id="HostDB:ENSG00000171133"/>
<dbReference type="eggNOG" id="ENOG502R18M">
    <property type="taxonomic scope" value="Eukaryota"/>
</dbReference>
<dbReference type="GeneTree" id="ENSGT01040000240406"/>
<dbReference type="HOGENOM" id="CLU_012526_0_1_1"/>
<dbReference type="InParanoid" id="Q8NGT1"/>
<dbReference type="OrthoDB" id="9574504at2759"/>
<dbReference type="PAN-GO" id="Q8NGT1">
    <property type="GO annotations" value="0 GO annotations based on evolutionary models"/>
</dbReference>
<dbReference type="PhylomeDB" id="Q8NGT1"/>
<dbReference type="TreeFam" id="TF352686"/>
<dbReference type="PathwayCommons" id="Q8NGT1"/>
<dbReference type="Reactome" id="R-HSA-9752946">
    <property type="pathway name" value="Expression and translocation of olfactory receptors"/>
</dbReference>
<dbReference type="SignaLink" id="Q8NGT1"/>
<dbReference type="BioGRID-ORCS" id="26248">
    <property type="hits" value="6 hits in 724 CRISPR screens"/>
</dbReference>
<dbReference type="GeneWiki" id="OR2K2"/>
<dbReference type="GenomeRNAi" id="26248"/>
<dbReference type="Pharos" id="Q8NGT1">
    <property type="development level" value="Tdark"/>
</dbReference>
<dbReference type="PRO" id="PR:Q8NGT1"/>
<dbReference type="Proteomes" id="UP000005640">
    <property type="component" value="Chromosome 9"/>
</dbReference>
<dbReference type="RNAct" id="Q8NGT1">
    <property type="molecule type" value="protein"/>
</dbReference>
<dbReference type="Bgee" id="ENSG00000171133">
    <property type="expression patterns" value="Expressed in male germ line stem cell (sensu Vertebrata) in testis and 19 other cell types or tissues"/>
</dbReference>
<dbReference type="ExpressionAtlas" id="Q8NGT1">
    <property type="expression patterns" value="baseline and differential"/>
</dbReference>
<dbReference type="GO" id="GO:0005886">
    <property type="term" value="C:plasma membrane"/>
    <property type="evidence" value="ECO:0000318"/>
    <property type="project" value="GO_Central"/>
</dbReference>
<dbReference type="GO" id="GO:0004930">
    <property type="term" value="F:G protein-coupled receptor activity"/>
    <property type="evidence" value="ECO:0007669"/>
    <property type="project" value="UniProtKB-KW"/>
</dbReference>
<dbReference type="GO" id="GO:0004984">
    <property type="term" value="F:olfactory receptor activity"/>
    <property type="evidence" value="ECO:0000318"/>
    <property type="project" value="GO_Central"/>
</dbReference>
<dbReference type="GO" id="GO:0050911">
    <property type="term" value="P:detection of chemical stimulus involved in sensory perception of smell"/>
    <property type="evidence" value="ECO:0000318"/>
    <property type="project" value="GO_Central"/>
</dbReference>
<dbReference type="CDD" id="cd15430">
    <property type="entry name" value="7tmA_OR13-like"/>
    <property type="match status" value="1"/>
</dbReference>
<dbReference type="FunFam" id="1.10.1220.70:FF:000001">
    <property type="entry name" value="Olfactory receptor"/>
    <property type="match status" value="1"/>
</dbReference>
<dbReference type="FunFam" id="1.20.1070.10:FF:000005">
    <property type="entry name" value="Olfactory receptor"/>
    <property type="match status" value="1"/>
</dbReference>
<dbReference type="Gene3D" id="1.20.1070.10">
    <property type="entry name" value="Rhodopsin 7-helix transmembrane proteins"/>
    <property type="match status" value="1"/>
</dbReference>
<dbReference type="InterPro" id="IPR000276">
    <property type="entry name" value="GPCR_Rhodpsn"/>
</dbReference>
<dbReference type="InterPro" id="IPR017452">
    <property type="entry name" value="GPCR_Rhodpsn_7TM"/>
</dbReference>
<dbReference type="InterPro" id="IPR000725">
    <property type="entry name" value="Olfact_rcpt"/>
</dbReference>
<dbReference type="PANTHER" id="PTHR26453">
    <property type="entry name" value="OLFACTORY RECEPTOR"/>
    <property type="match status" value="1"/>
</dbReference>
<dbReference type="Pfam" id="PF13853">
    <property type="entry name" value="7tm_4"/>
    <property type="match status" value="1"/>
</dbReference>
<dbReference type="PRINTS" id="PR00237">
    <property type="entry name" value="GPCRRHODOPSN"/>
</dbReference>
<dbReference type="PRINTS" id="PR00245">
    <property type="entry name" value="OLFACTORYR"/>
</dbReference>
<dbReference type="SUPFAM" id="SSF81321">
    <property type="entry name" value="Family A G protein-coupled receptor-like"/>
    <property type="match status" value="1"/>
</dbReference>
<dbReference type="PROSITE" id="PS00237">
    <property type="entry name" value="G_PROTEIN_RECEP_F1_1"/>
    <property type="match status" value="1"/>
</dbReference>
<dbReference type="PROSITE" id="PS50262">
    <property type="entry name" value="G_PROTEIN_RECEP_F1_2"/>
    <property type="match status" value="1"/>
</dbReference>
<proteinExistence type="evidence at transcript level"/>
<comment type="function">
    <text evidence="3">Odorant receptor.</text>
</comment>
<comment type="subcellular location">
    <subcellularLocation>
        <location>Cell membrane</location>
        <topology>Multi-pass membrane protein</topology>
    </subcellularLocation>
</comment>
<comment type="similarity">
    <text evidence="2">Belongs to the G-protein coupled receptor 1 family.</text>
</comment>
<comment type="sequence caution" evidence="3">
    <conflict type="erroneous initiation">
        <sequence resource="EMBL-CDS" id="DAA04675"/>
    </conflict>
    <text>Extended N-terminus.</text>
</comment>
<comment type="online information" name="Human Olfactory Receptor Data Exploratorium (HORDE)">
    <link uri="http://genome.weizmann.ac.il/horde/card/index/symbol:OR2K2"/>
</comment>
<evidence type="ECO:0000255" key="1"/>
<evidence type="ECO:0000255" key="2">
    <source>
        <dbReference type="PROSITE-ProRule" id="PRU00521"/>
    </source>
</evidence>
<evidence type="ECO:0000305" key="3"/>
<feature type="chain" id="PRO_0000150485" description="Olfactory receptor 2K2">
    <location>
        <begin position="1"/>
        <end position="316"/>
    </location>
</feature>
<feature type="topological domain" description="Extracellular" evidence="1">
    <location>
        <begin position="1"/>
        <end position="20"/>
    </location>
</feature>
<feature type="transmembrane region" description="Helical; Name=1" evidence="1">
    <location>
        <begin position="21"/>
        <end position="41"/>
    </location>
</feature>
<feature type="topological domain" description="Cytoplasmic" evidence="1">
    <location>
        <begin position="42"/>
        <end position="65"/>
    </location>
</feature>
<feature type="transmembrane region" description="Helical; Name=2" evidence="1">
    <location>
        <begin position="66"/>
        <end position="86"/>
    </location>
</feature>
<feature type="topological domain" description="Extracellular" evidence="1">
    <location>
        <begin position="87"/>
        <end position="97"/>
    </location>
</feature>
<feature type="transmembrane region" description="Helical; Name=3" evidence="1">
    <location>
        <begin position="98"/>
        <end position="118"/>
    </location>
</feature>
<feature type="topological domain" description="Cytoplasmic" evidence="1">
    <location>
        <begin position="119"/>
        <end position="143"/>
    </location>
</feature>
<feature type="transmembrane region" description="Helical; Name=4" evidence="1">
    <location>
        <begin position="144"/>
        <end position="164"/>
    </location>
</feature>
<feature type="topological domain" description="Extracellular" evidence="1">
    <location>
        <begin position="165"/>
        <end position="199"/>
    </location>
</feature>
<feature type="transmembrane region" description="Helical; Name=5" evidence="1">
    <location>
        <begin position="200"/>
        <end position="220"/>
    </location>
</feature>
<feature type="topological domain" description="Cytoplasmic" evidence="1">
    <location>
        <begin position="221"/>
        <end position="238"/>
    </location>
</feature>
<feature type="transmembrane region" description="Helical; Name=6" evidence="1">
    <location>
        <begin position="239"/>
        <end position="259"/>
    </location>
</feature>
<feature type="topological domain" description="Extracellular" evidence="1">
    <location>
        <begin position="260"/>
        <end position="270"/>
    </location>
</feature>
<feature type="transmembrane region" description="Helical; Name=7" evidence="1">
    <location>
        <begin position="271"/>
        <end position="291"/>
    </location>
</feature>
<feature type="topological domain" description="Cytoplasmic" evidence="1">
    <location>
        <begin position="292"/>
        <end position="316"/>
    </location>
</feature>
<feature type="glycosylation site" description="N-linked (GlcNAc...) asparagine" evidence="1">
    <location>
        <position position="5"/>
    </location>
</feature>
<feature type="disulfide bond" evidence="2">
    <location>
        <begin position="97"/>
        <end position="188"/>
    </location>
</feature>
<gene>
    <name type="primary">OR2K2</name>
    <name type="synonym">OR2AR1P</name>
</gene>